<organism>
    <name type="scientific">Corynebacterium glutamicum (strain R)</name>
    <dbReference type="NCBI Taxonomy" id="340322"/>
    <lineage>
        <taxon>Bacteria</taxon>
        <taxon>Bacillati</taxon>
        <taxon>Actinomycetota</taxon>
        <taxon>Actinomycetes</taxon>
        <taxon>Mycobacteriales</taxon>
        <taxon>Corynebacteriaceae</taxon>
        <taxon>Corynebacterium</taxon>
    </lineage>
</organism>
<accession>A4QGQ5</accession>
<evidence type="ECO:0000255" key="1">
    <source>
        <dbReference type="HAMAP-Rule" id="MF_01405"/>
    </source>
</evidence>
<name>IXTPA_CORGB</name>
<feature type="chain" id="PRO_1000068418" description="dITP/XTP pyrophosphatase">
    <location>
        <begin position="1"/>
        <end position="206"/>
    </location>
</feature>
<feature type="active site" description="Proton acceptor" evidence="1">
    <location>
        <position position="72"/>
    </location>
</feature>
<feature type="binding site" evidence="1">
    <location>
        <begin position="7"/>
        <end position="12"/>
    </location>
    <ligand>
        <name>substrate</name>
    </ligand>
</feature>
<feature type="binding site" evidence="1">
    <location>
        <position position="72"/>
    </location>
    <ligand>
        <name>Mg(2+)</name>
        <dbReference type="ChEBI" id="CHEBI:18420"/>
    </ligand>
</feature>
<feature type="binding site" evidence="1">
    <location>
        <position position="73"/>
    </location>
    <ligand>
        <name>substrate</name>
    </ligand>
</feature>
<feature type="binding site" evidence="1">
    <location>
        <begin position="155"/>
        <end position="158"/>
    </location>
    <ligand>
        <name>substrate</name>
    </ligand>
</feature>
<feature type="binding site" evidence="1">
    <location>
        <position position="182"/>
    </location>
    <ligand>
        <name>substrate</name>
    </ligand>
</feature>
<feature type="binding site" evidence="1">
    <location>
        <begin position="187"/>
        <end position="188"/>
    </location>
    <ligand>
        <name>substrate</name>
    </ligand>
</feature>
<gene>
    <name type="ordered locus">cgR_2413</name>
</gene>
<reference key="1">
    <citation type="journal article" date="2007" name="Microbiology">
        <title>Comparative analysis of the Corynebacterium glutamicum group and complete genome sequence of strain R.</title>
        <authorList>
            <person name="Yukawa H."/>
            <person name="Omumasaba C.A."/>
            <person name="Nonaka H."/>
            <person name="Kos P."/>
            <person name="Okai N."/>
            <person name="Suzuki N."/>
            <person name="Suda M."/>
            <person name="Tsuge Y."/>
            <person name="Watanabe J."/>
            <person name="Ikeda Y."/>
            <person name="Vertes A.A."/>
            <person name="Inui M."/>
        </authorList>
    </citation>
    <scope>NUCLEOTIDE SEQUENCE [LARGE SCALE GENOMIC DNA]</scope>
    <source>
        <strain>R</strain>
    </source>
</reference>
<sequence length="206" mass="22010">MKLLLASNNAKKLKELQRILDQAGLDSVELLALRDVEAYDEPIEDGRTFADNAQIKARAGVAHTGIATIADDSGIAVEELNGMPGVLSARWSGAHGNDTANNELLLAQMEHVPDERRNAAFVSVCVLALPDGQEFVQEGRWEGQLLRGPKGENGFGYDPLFIPAEEIGGQGRSSAELSAEEKDALSHRGQALRGLVEKIAQVAAAS</sequence>
<dbReference type="EC" id="3.6.1.66" evidence="1"/>
<dbReference type="EMBL" id="AP009044">
    <property type="protein sequence ID" value="BAF55421.1"/>
    <property type="molecule type" value="Genomic_DNA"/>
</dbReference>
<dbReference type="RefSeq" id="WP_011897795.1">
    <property type="nucleotide sequence ID" value="NC_009342.1"/>
</dbReference>
<dbReference type="SMR" id="A4QGQ5"/>
<dbReference type="KEGG" id="cgt:cgR_2413"/>
<dbReference type="HOGENOM" id="CLU_082080_0_1_11"/>
<dbReference type="PhylomeDB" id="A4QGQ5"/>
<dbReference type="Proteomes" id="UP000006698">
    <property type="component" value="Chromosome"/>
</dbReference>
<dbReference type="GO" id="GO:0005829">
    <property type="term" value="C:cytosol"/>
    <property type="evidence" value="ECO:0007669"/>
    <property type="project" value="TreeGrafter"/>
</dbReference>
<dbReference type="GO" id="GO:0035870">
    <property type="term" value="F:dITP diphosphatase activity"/>
    <property type="evidence" value="ECO:0007669"/>
    <property type="project" value="RHEA"/>
</dbReference>
<dbReference type="GO" id="GO:0036220">
    <property type="term" value="F:ITP diphosphatase activity"/>
    <property type="evidence" value="ECO:0007669"/>
    <property type="project" value="UniProtKB-EC"/>
</dbReference>
<dbReference type="GO" id="GO:0046872">
    <property type="term" value="F:metal ion binding"/>
    <property type="evidence" value="ECO:0007669"/>
    <property type="project" value="UniProtKB-KW"/>
</dbReference>
<dbReference type="GO" id="GO:0000166">
    <property type="term" value="F:nucleotide binding"/>
    <property type="evidence" value="ECO:0007669"/>
    <property type="project" value="UniProtKB-KW"/>
</dbReference>
<dbReference type="GO" id="GO:0017111">
    <property type="term" value="F:ribonucleoside triphosphate phosphatase activity"/>
    <property type="evidence" value="ECO:0007669"/>
    <property type="project" value="InterPro"/>
</dbReference>
<dbReference type="GO" id="GO:0036222">
    <property type="term" value="F:XTP diphosphatase activity"/>
    <property type="evidence" value="ECO:0007669"/>
    <property type="project" value="RHEA"/>
</dbReference>
<dbReference type="GO" id="GO:0009117">
    <property type="term" value="P:nucleotide metabolic process"/>
    <property type="evidence" value="ECO:0007669"/>
    <property type="project" value="UniProtKB-KW"/>
</dbReference>
<dbReference type="GO" id="GO:0009146">
    <property type="term" value="P:purine nucleoside triphosphate catabolic process"/>
    <property type="evidence" value="ECO:0007669"/>
    <property type="project" value="UniProtKB-UniRule"/>
</dbReference>
<dbReference type="CDD" id="cd00515">
    <property type="entry name" value="HAM1"/>
    <property type="match status" value="1"/>
</dbReference>
<dbReference type="FunFam" id="3.90.950.10:FF:000001">
    <property type="entry name" value="dITP/XTP pyrophosphatase"/>
    <property type="match status" value="1"/>
</dbReference>
<dbReference type="Gene3D" id="3.90.950.10">
    <property type="match status" value="1"/>
</dbReference>
<dbReference type="HAMAP" id="MF_01405">
    <property type="entry name" value="Non_canon_purine_NTPase"/>
    <property type="match status" value="1"/>
</dbReference>
<dbReference type="InterPro" id="IPR020922">
    <property type="entry name" value="dITP/XTP_pyrophosphatase"/>
</dbReference>
<dbReference type="InterPro" id="IPR029001">
    <property type="entry name" value="ITPase-like_fam"/>
</dbReference>
<dbReference type="InterPro" id="IPR002637">
    <property type="entry name" value="RdgB/HAM1"/>
</dbReference>
<dbReference type="NCBIfam" id="TIGR00042">
    <property type="entry name" value="RdgB/HAM1 family non-canonical purine NTP pyrophosphatase"/>
    <property type="match status" value="1"/>
</dbReference>
<dbReference type="PANTHER" id="PTHR11067:SF9">
    <property type="entry name" value="INOSINE TRIPHOSPHATE PYROPHOSPHATASE"/>
    <property type="match status" value="1"/>
</dbReference>
<dbReference type="PANTHER" id="PTHR11067">
    <property type="entry name" value="INOSINE TRIPHOSPHATE PYROPHOSPHATASE/HAM1 PROTEIN"/>
    <property type="match status" value="1"/>
</dbReference>
<dbReference type="Pfam" id="PF01725">
    <property type="entry name" value="Ham1p_like"/>
    <property type="match status" value="1"/>
</dbReference>
<dbReference type="SUPFAM" id="SSF52972">
    <property type="entry name" value="ITPase-like"/>
    <property type="match status" value="1"/>
</dbReference>
<comment type="function">
    <text evidence="1">Pyrophosphatase that catalyzes the hydrolysis of nucleoside triphosphates to their monophosphate derivatives, with a high preference for the non-canonical purine nucleotides XTP (xanthosine triphosphate), dITP (deoxyinosine triphosphate) and ITP. Seems to function as a house-cleaning enzyme that removes non-canonical purine nucleotides from the nucleotide pool, thus preventing their incorporation into DNA/RNA and avoiding chromosomal lesions.</text>
</comment>
<comment type="catalytic activity">
    <reaction evidence="1">
        <text>XTP + H2O = XMP + diphosphate + H(+)</text>
        <dbReference type="Rhea" id="RHEA:28610"/>
        <dbReference type="ChEBI" id="CHEBI:15377"/>
        <dbReference type="ChEBI" id="CHEBI:15378"/>
        <dbReference type="ChEBI" id="CHEBI:33019"/>
        <dbReference type="ChEBI" id="CHEBI:57464"/>
        <dbReference type="ChEBI" id="CHEBI:61314"/>
        <dbReference type="EC" id="3.6.1.66"/>
    </reaction>
</comment>
<comment type="catalytic activity">
    <reaction evidence="1">
        <text>dITP + H2O = dIMP + diphosphate + H(+)</text>
        <dbReference type="Rhea" id="RHEA:28342"/>
        <dbReference type="ChEBI" id="CHEBI:15377"/>
        <dbReference type="ChEBI" id="CHEBI:15378"/>
        <dbReference type="ChEBI" id="CHEBI:33019"/>
        <dbReference type="ChEBI" id="CHEBI:61194"/>
        <dbReference type="ChEBI" id="CHEBI:61382"/>
        <dbReference type="EC" id="3.6.1.66"/>
    </reaction>
</comment>
<comment type="catalytic activity">
    <reaction evidence="1">
        <text>ITP + H2O = IMP + diphosphate + H(+)</text>
        <dbReference type="Rhea" id="RHEA:29399"/>
        <dbReference type="ChEBI" id="CHEBI:15377"/>
        <dbReference type="ChEBI" id="CHEBI:15378"/>
        <dbReference type="ChEBI" id="CHEBI:33019"/>
        <dbReference type="ChEBI" id="CHEBI:58053"/>
        <dbReference type="ChEBI" id="CHEBI:61402"/>
        <dbReference type="EC" id="3.6.1.66"/>
    </reaction>
</comment>
<comment type="cofactor">
    <cofactor evidence="1">
        <name>Mg(2+)</name>
        <dbReference type="ChEBI" id="CHEBI:18420"/>
    </cofactor>
    <text evidence="1">Binds 1 Mg(2+) ion per subunit.</text>
</comment>
<comment type="subunit">
    <text evidence="1">Homodimer.</text>
</comment>
<comment type="similarity">
    <text evidence="1">Belongs to the HAM1 NTPase family.</text>
</comment>
<proteinExistence type="inferred from homology"/>
<protein>
    <recommendedName>
        <fullName evidence="1">dITP/XTP pyrophosphatase</fullName>
        <ecNumber evidence="1">3.6.1.66</ecNumber>
    </recommendedName>
    <alternativeName>
        <fullName evidence="1">Non-canonical purine NTP pyrophosphatase</fullName>
    </alternativeName>
    <alternativeName>
        <fullName evidence="1">Non-standard purine NTP pyrophosphatase</fullName>
    </alternativeName>
    <alternativeName>
        <fullName evidence="1">Nucleoside-triphosphate diphosphatase</fullName>
    </alternativeName>
    <alternativeName>
        <fullName evidence="1">Nucleoside-triphosphate pyrophosphatase</fullName>
        <shortName evidence="1">NTPase</shortName>
    </alternativeName>
</protein>
<keyword id="KW-0378">Hydrolase</keyword>
<keyword id="KW-0460">Magnesium</keyword>
<keyword id="KW-0479">Metal-binding</keyword>
<keyword id="KW-0546">Nucleotide metabolism</keyword>
<keyword id="KW-0547">Nucleotide-binding</keyword>